<feature type="chain" id="PRO_1000080098" description="Large ribosomal subunit protein bL20">
    <location>
        <begin position="1"/>
        <end position="119"/>
    </location>
</feature>
<accession>A9ESS5</accession>
<name>RL20_SORC5</name>
<comment type="function">
    <text evidence="1">Binds directly to 23S ribosomal RNA and is necessary for the in vitro assembly process of the 50S ribosomal subunit. It is not involved in the protein synthesizing functions of that subunit.</text>
</comment>
<comment type="similarity">
    <text evidence="1">Belongs to the bacterial ribosomal protein bL20 family.</text>
</comment>
<organism>
    <name type="scientific">Sorangium cellulosum (strain So ce56)</name>
    <name type="common">Polyangium cellulosum (strain So ce56)</name>
    <dbReference type="NCBI Taxonomy" id="448385"/>
    <lineage>
        <taxon>Bacteria</taxon>
        <taxon>Pseudomonadati</taxon>
        <taxon>Myxococcota</taxon>
        <taxon>Polyangia</taxon>
        <taxon>Polyangiales</taxon>
        <taxon>Polyangiaceae</taxon>
        <taxon>Sorangium</taxon>
    </lineage>
</organism>
<sequence>MPRVKRGFKARRRRNRVLNQTEGYFLGRKNRFRQAVEVLRHAWEYGYISRKLKKRDFRRLWITRINAAARLNGTTYSRLVSGLKKAGIALDRKILSEIAIHDPASFGAVAKLASPAAAK</sequence>
<keyword id="KW-1185">Reference proteome</keyword>
<keyword id="KW-0687">Ribonucleoprotein</keyword>
<keyword id="KW-0689">Ribosomal protein</keyword>
<keyword id="KW-0694">RNA-binding</keyword>
<keyword id="KW-0699">rRNA-binding</keyword>
<protein>
    <recommendedName>
        <fullName evidence="1">Large ribosomal subunit protein bL20</fullName>
    </recommendedName>
    <alternativeName>
        <fullName evidence="2">50S ribosomal protein L20</fullName>
    </alternativeName>
</protein>
<gene>
    <name evidence="1" type="primary">rplT</name>
    <name type="ordered locus">sce7245</name>
</gene>
<evidence type="ECO:0000255" key="1">
    <source>
        <dbReference type="HAMAP-Rule" id="MF_00382"/>
    </source>
</evidence>
<evidence type="ECO:0000305" key="2"/>
<proteinExistence type="inferred from homology"/>
<reference key="1">
    <citation type="journal article" date="2007" name="Nat. Biotechnol.">
        <title>Complete genome sequence of the myxobacterium Sorangium cellulosum.</title>
        <authorList>
            <person name="Schneiker S."/>
            <person name="Perlova O."/>
            <person name="Kaiser O."/>
            <person name="Gerth K."/>
            <person name="Alici A."/>
            <person name="Altmeyer M.O."/>
            <person name="Bartels D."/>
            <person name="Bekel T."/>
            <person name="Beyer S."/>
            <person name="Bode E."/>
            <person name="Bode H.B."/>
            <person name="Bolten C.J."/>
            <person name="Choudhuri J.V."/>
            <person name="Doss S."/>
            <person name="Elnakady Y.A."/>
            <person name="Frank B."/>
            <person name="Gaigalat L."/>
            <person name="Goesmann A."/>
            <person name="Groeger C."/>
            <person name="Gross F."/>
            <person name="Jelsbak L."/>
            <person name="Jelsbak L."/>
            <person name="Kalinowski J."/>
            <person name="Kegler C."/>
            <person name="Knauber T."/>
            <person name="Konietzny S."/>
            <person name="Kopp M."/>
            <person name="Krause L."/>
            <person name="Krug D."/>
            <person name="Linke B."/>
            <person name="Mahmud T."/>
            <person name="Martinez-Arias R."/>
            <person name="McHardy A.C."/>
            <person name="Merai M."/>
            <person name="Meyer F."/>
            <person name="Mormann S."/>
            <person name="Munoz-Dorado J."/>
            <person name="Perez J."/>
            <person name="Pradella S."/>
            <person name="Rachid S."/>
            <person name="Raddatz G."/>
            <person name="Rosenau F."/>
            <person name="Rueckert C."/>
            <person name="Sasse F."/>
            <person name="Scharfe M."/>
            <person name="Schuster S.C."/>
            <person name="Suen G."/>
            <person name="Treuner-Lange A."/>
            <person name="Velicer G.J."/>
            <person name="Vorholter F.-J."/>
            <person name="Weissman K.J."/>
            <person name="Welch R.D."/>
            <person name="Wenzel S.C."/>
            <person name="Whitworth D.E."/>
            <person name="Wilhelm S."/>
            <person name="Wittmann C."/>
            <person name="Bloecker H."/>
            <person name="Puehler A."/>
            <person name="Mueller R."/>
        </authorList>
    </citation>
    <scope>NUCLEOTIDE SEQUENCE [LARGE SCALE GENOMIC DNA]</scope>
    <source>
        <strain>So ce56</strain>
    </source>
</reference>
<dbReference type="EMBL" id="AM746676">
    <property type="protein sequence ID" value="CAN97414.1"/>
    <property type="molecule type" value="Genomic_DNA"/>
</dbReference>
<dbReference type="RefSeq" id="WP_012239853.1">
    <property type="nucleotide sequence ID" value="NC_010162.1"/>
</dbReference>
<dbReference type="SMR" id="A9ESS5"/>
<dbReference type="STRING" id="448385.sce7245"/>
<dbReference type="KEGG" id="scl:sce7245"/>
<dbReference type="eggNOG" id="COG0292">
    <property type="taxonomic scope" value="Bacteria"/>
</dbReference>
<dbReference type="HOGENOM" id="CLU_123265_0_1_7"/>
<dbReference type="OrthoDB" id="9808966at2"/>
<dbReference type="BioCyc" id="SCEL448385:SCE_RS37115-MONOMER"/>
<dbReference type="Proteomes" id="UP000002139">
    <property type="component" value="Chromosome"/>
</dbReference>
<dbReference type="GO" id="GO:1990904">
    <property type="term" value="C:ribonucleoprotein complex"/>
    <property type="evidence" value="ECO:0007669"/>
    <property type="project" value="UniProtKB-KW"/>
</dbReference>
<dbReference type="GO" id="GO:0005840">
    <property type="term" value="C:ribosome"/>
    <property type="evidence" value="ECO:0007669"/>
    <property type="project" value="UniProtKB-KW"/>
</dbReference>
<dbReference type="GO" id="GO:0019843">
    <property type="term" value="F:rRNA binding"/>
    <property type="evidence" value="ECO:0007669"/>
    <property type="project" value="UniProtKB-UniRule"/>
</dbReference>
<dbReference type="GO" id="GO:0003735">
    <property type="term" value="F:structural constituent of ribosome"/>
    <property type="evidence" value="ECO:0007669"/>
    <property type="project" value="InterPro"/>
</dbReference>
<dbReference type="GO" id="GO:0000027">
    <property type="term" value="P:ribosomal large subunit assembly"/>
    <property type="evidence" value="ECO:0007669"/>
    <property type="project" value="UniProtKB-UniRule"/>
</dbReference>
<dbReference type="GO" id="GO:0006412">
    <property type="term" value="P:translation"/>
    <property type="evidence" value="ECO:0007669"/>
    <property type="project" value="InterPro"/>
</dbReference>
<dbReference type="CDD" id="cd07026">
    <property type="entry name" value="Ribosomal_L20"/>
    <property type="match status" value="1"/>
</dbReference>
<dbReference type="FunFam" id="1.10.1900.20:FF:000001">
    <property type="entry name" value="50S ribosomal protein L20"/>
    <property type="match status" value="1"/>
</dbReference>
<dbReference type="Gene3D" id="6.10.160.10">
    <property type="match status" value="1"/>
</dbReference>
<dbReference type="Gene3D" id="1.10.1900.20">
    <property type="entry name" value="Ribosomal protein L20"/>
    <property type="match status" value="1"/>
</dbReference>
<dbReference type="HAMAP" id="MF_00382">
    <property type="entry name" value="Ribosomal_bL20"/>
    <property type="match status" value="1"/>
</dbReference>
<dbReference type="InterPro" id="IPR005813">
    <property type="entry name" value="Ribosomal_bL20"/>
</dbReference>
<dbReference type="InterPro" id="IPR049946">
    <property type="entry name" value="RIBOSOMAL_L20_CS"/>
</dbReference>
<dbReference type="InterPro" id="IPR035566">
    <property type="entry name" value="Ribosomal_protein_bL20_C"/>
</dbReference>
<dbReference type="NCBIfam" id="TIGR01032">
    <property type="entry name" value="rplT_bact"/>
    <property type="match status" value="1"/>
</dbReference>
<dbReference type="PANTHER" id="PTHR10986">
    <property type="entry name" value="39S RIBOSOMAL PROTEIN L20"/>
    <property type="match status" value="1"/>
</dbReference>
<dbReference type="Pfam" id="PF00453">
    <property type="entry name" value="Ribosomal_L20"/>
    <property type="match status" value="1"/>
</dbReference>
<dbReference type="PRINTS" id="PR00062">
    <property type="entry name" value="RIBOSOMALL20"/>
</dbReference>
<dbReference type="SUPFAM" id="SSF74731">
    <property type="entry name" value="Ribosomal protein L20"/>
    <property type="match status" value="1"/>
</dbReference>
<dbReference type="PROSITE" id="PS00937">
    <property type="entry name" value="RIBOSOMAL_L20"/>
    <property type="match status" value="1"/>
</dbReference>